<comment type="function">
    <text evidence="2">Multifunctional protein that is involved in the regulation of many processes including cell proliferation, apoptosis, cell cycle progression or transcription. Regulates the proliferation of neuronal stem cells, differentiation of leukemic cells and progression from G1 to S phase of the cell cycle. As negative regulator of caspase-3-dependent apoptosis, may act as an antagonist of ANP32A in regulating tissue homeostasis. Exhibits histone chaperone properties, able to recruit histones to certain promoters, thus regulating the transcription of specific genes. Also plays an essential role in the nucleocytoplasmic transport of specific mRNAs via the uncommon nuclear mRNA export receptor XPO1/CRM1.</text>
</comment>
<comment type="subunit">
    <text evidence="2">Interacts with histones H3 and H4. Interacts with KLF5; this interaction induces promoter region-specific histone incorporation and inhibition of histone acetylation by ANP32B.</text>
</comment>
<comment type="subcellular location">
    <subcellularLocation>
        <location evidence="2">Nucleus</location>
    </subcellularLocation>
</comment>
<comment type="domain">
    <text evidence="1">Histone binding is mediated by the concave surface of the LRR region.</text>
</comment>
<comment type="PTM">
    <text evidence="2">Directly cleaved by caspase-3/CASP3.</text>
</comment>
<comment type="similarity">
    <text evidence="4">Belongs to the ANP32 family.</text>
</comment>
<gene>
    <name type="primary">ANP32B</name>
    <name type="ORF">RCJMB04_1j7</name>
</gene>
<accession>Q5ZMN0</accession>
<keyword id="KW-0143">Chaperone</keyword>
<keyword id="KW-0433">Leucine-rich repeat</keyword>
<keyword id="KW-0539">Nucleus</keyword>
<keyword id="KW-1185">Reference proteome</keyword>
<keyword id="KW-0677">Repeat</keyword>
<organism>
    <name type="scientific">Gallus gallus</name>
    <name type="common">Chicken</name>
    <dbReference type="NCBI Taxonomy" id="9031"/>
    <lineage>
        <taxon>Eukaryota</taxon>
        <taxon>Metazoa</taxon>
        <taxon>Chordata</taxon>
        <taxon>Craniata</taxon>
        <taxon>Vertebrata</taxon>
        <taxon>Euteleostomi</taxon>
        <taxon>Archelosauria</taxon>
        <taxon>Archosauria</taxon>
        <taxon>Dinosauria</taxon>
        <taxon>Saurischia</taxon>
        <taxon>Theropoda</taxon>
        <taxon>Coelurosauria</taxon>
        <taxon>Aves</taxon>
        <taxon>Neognathae</taxon>
        <taxon>Galloanserae</taxon>
        <taxon>Galliformes</taxon>
        <taxon>Phasianidae</taxon>
        <taxon>Phasianinae</taxon>
        <taxon>Gallus</taxon>
    </lineage>
</organism>
<protein>
    <recommendedName>
        <fullName>Acidic leucine-rich nuclear phosphoprotein 32 family member B</fullName>
    </recommendedName>
</protein>
<sequence>MEMKKRLTLELRNKKPGEVKELVLDNCRSDDGKIVGLSSDFENLEFLSMINVNLLSISNLPKLNKLRKLELSDNRISGGLEVLAERTPNLTHLNLSGNKIKDINTLEPLKKLPNLHSLDLFNCEVTMLINYRESVFTLLPQLTYLDGFDADEQEAPDSDPEADGDGLEDEYENGEGEEEEDDDEEDDLDEEVIDEEDDEDDDLEGEEEEDGVDDEEEDEEEDGEDEEDDEADDDLPRGEKRKRNLEDEGEEDPEDEEDDEDD</sequence>
<name>AN32B_CHICK</name>
<dbReference type="EMBL" id="AJ719354">
    <property type="protein sequence ID" value="CAG31013.1"/>
    <property type="molecule type" value="mRNA"/>
</dbReference>
<dbReference type="RefSeq" id="NP_001026105.1">
    <property type="nucleotide sequence ID" value="NM_001030934.2"/>
</dbReference>
<dbReference type="SMR" id="Q5ZMN0"/>
<dbReference type="FunCoup" id="Q5ZMN0">
    <property type="interactions" value="329"/>
</dbReference>
<dbReference type="STRING" id="9031.ENSGALP00000062993"/>
<dbReference type="PaxDb" id="9031-ENSGALP00000002398"/>
<dbReference type="Ensembl" id="ENSGALT00010069125.1">
    <property type="protein sequence ID" value="ENSGALP00010042567.1"/>
    <property type="gene ID" value="ENSGALG00010028543.1"/>
</dbReference>
<dbReference type="GeneID" id="420087"/>
<dbReference type="KEGG" id="gga:420087"/>
<dbReference type="CTD" id="10541"/>
<dbReference type="VEuPathDB" id="HostDB:geneid_420087"/>
<dbReference type="eggNOG" id="KOG2739">
    <property type="taxonomic scope" value="Eukaryota"/>
</dbReference>
<dbReference type="GeneTree" id="ENSGT00950000182907"/>
<dbReference type="HOGENOM" id="CLU_063314_1_1_1"/>
<dbReference type="InParanoid" id="Q5ZMN0"/>
<dbReference type="OrthoDB" id="2160613at2759"/>
<dbReference type="PhylomeDB" id="Q5ZMN0"/>
<dbReference type="TreeFam" id="TF317206"/>
<dbReference type="PRO" id="PR:Q5ZMN0"/>
<dbReference type="Proteomes" id="UP000000539">
    <property type="component" value="Chromosome 28"/>
</dbReference>
<dbReference type="Bgee" id="ENSGALG00000037483">
    <property type="expression patterns" value="Expressed in spleen and 12 other cell types or tissues"/>
</dbReference>
<dbReference type="GO" id="GO:0062023">
    <property type="term" value="C:collagen-containing extracellular matrix"/>
    <property type="evidence" value="ECO:0000314"/>
    <property type="project" value="AgBase"/>
</dbReference>
<dbReference type="GO" id="GO:0005634">
    <property type="term" value="C:nucleus"/>
    <property type="evidence" value="ECO:0000318"/>
    <property type="project" value="GO_Central"/>
</dbReference>
<dbReference type="GO" id="GO:0032991">
    <property type="term" value="C:protein-containing complex"/>
    <property type="evidence" value="ECO:0000314"/>
    <property type="project" value="AgBase"/>
</dbReference>
<dbReference type="GO" id="GO:0042393">
    <property type="term" value="F:histone binding"/>
    <property type="evidence" value="ECO:0000318"/>
    <property type="project" value="GO_Central"/>
</dbReference>
<dbReference type="GO" id="GO:0044877">
    <property type="term" value="F:protein-containing complex binding"/>
    <property type="evidence" value="ECO:0000314"/>
    <property type="project" value="AgBase"/>
</dbReference>
<dbReference type="GO" id="GO:0042981">
    <property type="term" value="P:regulation of apoptotic process"/>
    <property type="evidence" value="ECO:0000318"/>
    <property type="project" value="GO_Central"/>
</dbReference>
<dbReference type="FunFam" id="3.80.10.10:FF:000003">
    <property type="entry name" value="Acidic leucine-rich nuclear phosphoprotein 32 family member A"/>
    <property type="match status" value="1"/>
</dbReference>
<dbReference type="Gene3D" id="3.80.10.10">
    <property type="entry name" value="Ribonuclease Inhibitor"/>
    <property type="match status" value="1"/>
</dbReference>
<dbReference type="InterPro" id="IPR045081">
    <property type="entry name" value="AN32"/>
</dbReference>
<dbReference type="InterPro" id="IPR001611">
    <property type="entry name" value="Leu-rich_rpt"/>
</dbReference>
<dbReference type="InterPro" id="IPR032675">
    <property type="entry name" value="LRR_dom_sf"/>
</dbReference>
<dbReference type="PANTHER" id="PTHR11375">
    <property type="entry name" value="ACIDIC LEUCINE-RICH NUCLEAR PHOSPHOPROTEIN 32"/>
    <property type="match status" value="1"/>
</dbReference>
<dbReference type="PANTHER" id="PTHR11375:SF22">
    <property type="entry name" value="ACIDIC LEUCINE-RICH NUCLEAR PHOSPHOPROTEIN 32 FAMILY MEMBER B"/>
    <property type="match status" value="1"/>
</dbReference>
<dbReference type="Pfam" id="PF14580">
    <property type="entry name" value="LRR_9"/>
    <property type="match status" value="1"/>
</dbReference>
<dbReference type="SUPFAM" id="SSF52058">
    <property type="entry name" value="L domain-like"/>
    <property type="match status" value="1"/>
</dbReference>
<dbReference type="PROSITE" id="PS51450">
    <property type="entry name" value="LRR"/>
    <property type="match status" value="4"/>
</dbReference>
<evidence type="ECO:0000250" key="1"/>
<evidence type="ECO:0000250" key="2">
    <source>
        <dbReference type="UniProtKB" id="Q92688"/>
    </source>
</evidence>
<evidence type="ECO:0000256" key="3">
    <source>
        <dbReference type="SAM" id="MobiDB-lite"/>
    </source>
</evidence>
<evidence type="ECO:0000305" key="4"/>
<proteinExistence type="evidence at transcript level"/>
<reference key="1">
    <citation type="journal article" date="2005" name="Genome Biol.">
        <title>Full-length cDNAs from chicken bursal lymphocytes to facilitate gene function analysis.</title>
        <authorList>
            <person name="Caldwell R.B."/>
            <person name="Kierzek A.M."/>
            <person name="Arakawa H."/>
            <person name="Bezzubov Y."/>
            <person name="Zaim J."/>
            <person name="Fiedler P."/>
            <person name="Kutter S."/>
            <person name="Blagodatski A."/>
            <person name="Kostovska D."/>
            <person name="Koter M."/>
            <person name="Plachy J."/>
            <person name="Carninci P."/>
            <person name="Hayashizaki Y."/>
            <person name="Buerstedde J.-M."/>
        </authorList>
    </citation>
    <scope>NUCLEOTIDE SEQUENCE [LARGE SCALE MRNA]</scope>
    <source>
        <strain>CB</strain>
        <tissue>Bursa of Fabricius</tissue>
    </source>
</reference>
<reference key="2">
    <citation type="journal article" date="2005" name="Cerebellum">
        <title>The Anp32 family of proteins containing leucine-rich repeats.</title>
        <authorList>
            <person name="Matilla A."/>
            <person name="Radrizzani M."/>
        </authorList>
    </citation>
    <scope>GENE FAMILY</scope>
    <scope>NOMENCLATURE</scope>
</reference>
<feature type="chain" id="PRO_0000280063" description="Acidic leucine-rich nuclear phosphoprotein 32 family member B">
    <location>
        <begin position="1"/>
        <end position="262"/>
    </location>
</feature>
<feature type="repeat" description="LRR 1">
    <location>
        <begin position="16"/>
        <end position="40"/>
    </location>
</feature>
<feature type="repeat" description="LRR 2">
    <location>
        <begin position="43"/>
        <end position="64"/>
    </location>
</feature>
<feature type="repeat" description="LRR 3">
    <location>
        <begin position="65"/>
        <end position="87"/>
    </location>
</feature>
<feature type="repeat" description="LRR 4">
    <location>
        <begin position="89"/>
        <end position="110"/>
    </location>
</feature>
<feature type="domain" description="LRRCT">
    <location>
        <begin position="123"/>
        <end position="161"/>
    </location>
</feature>
<feature type="region of interest" description="Disordered" evidence="3">
    <location>
        <begin position="150"/>
        <end position="262"/>
    </location>
</feature>
<feature type="short sequence motif" description="Nuclear localization signal" evidence="2">
    <location>
        <begin position="240"/>
        <end position="243"/>
    </location>
</feature>
<feature type="compositionally biased region" description="Acidic residues" evidence="3">
    <location>
        <begin position="150"/>
        <end position="233"/>
    </location>
</feature>
<feature type="compositionally biased region" description="Acidic residues" evidence="3">
    <location>
        <begin position="247"/>
        <end position="262"/>
    </location>
</feature>